<evidence type="ECO:0000250" key="1">
    <source>
        <dbReference type="UniProtKB" id="Q02809"/>
    </source>
</evidence>
<evidence type="ECO:0000255" key="2">
    <source>
        <dbReference type="PROSITE-ProRule" id="PRU00805"/>
    </source>
</evidence>
<evidence type="ECO:0000256" key="3">
    <source>
        <dbReference type="SAM" id="MobiDB-lite"/>
    </source>
</evidence>
<evidence type="ECO:0000269" key="4">
    <source>
    </source>
</evidence>
<evidence type="ECO:0000303" key="5">
    <source>
    </source>
</evidence>
<evidence type="ECO:0000305" key="6"/>
<evidence type="ECO:0000312" key="7">
    <source>
        <dbReference type="Araport" id="AT1G22950"/>
    </source>
</evidence>
<evidence type="ECO:0000312" key="8">
    <source>
        <dbReference type="EMBL" id="AAB72163.1"/>
    </source>
</evidence>
<reference key="1">
    <citation type="journal article" date="2000" name="Nature">
        <title>Sequence and analysis of chromosome 1 of the plant Arabidopsis thaliana.</title>
        <authorList>
            <person name="Theologis A."/>
            <person name="Ecker J.R."/>
            <person name="Palm C.J."/>
            <person name="Federspiel N.A."/>
            <person name="Kaul S."/>
            <person name="White O."/>
            <person name="Alonso J."/>
            <person name="Altafi H."/>
            <person name="Araujo R."/>
            <person name="Bowman C.L."/>
            <person name="Brooks S.Y."/>
            <person name="Buehler E."/>
            <person name="Chan A."/>
            <person name="Chao Q."/>
            <person name="Chen H."/>
            <person name="Cheuk R.F."/>
            <person name="Chin C.W."/>
            <person name="Chung M.K."/>
            <person name="Conn L."/>
            <person name="Conway A.B."/>
            <person name="Conway A.R."/>
            <person name="Creasy T.H."/>
            <person name="Dewar K."/>
            <person name="Dunn P."/>
            <person name="Etgu P."/>
            <person name="Feldblyum T.V."/>
            <person name="Feng J.-D."/>
            <person name="Fong B."/>
            <person name="Fujii C.Y."/>
            <person name="Gill J.E."/>
            <person name="Goldsmith A.D."/>
            <person name="Haas B."/>
            <person name="Hansen N.F."/>
            <person name="Hughes B."/>
            <person name="Huizar L."/>
            <person name="Hunter J.L."/>
            <person name="Jenkins J."/>
            <person name="Johnson-Hopson C."/>
            <person name="Khan S."/>
            <person name="Khaykin E."/>
            <person name="Kim C.J."/>
            <person name="Koo H.L."/>
            <person name="Kremenetskaia I."/>
            <person name="Kurtz D.B."/>
            <person name="Kwan A."/>
            <person name="Lam B."/>
            <person name="Langin-Hooper S."/>
            <person name="Lee A."/>
            <person name="Lee J.M."/>
            <person name="Lenz C.A."/>
            <person name="Li J.H."/>
            <person name="Li Y.-P."/>
            <person name="Lin X."/>
            <person name="Liu S.X."/>
            <person name="Liu Z.A."/>
            <person name="Luros J.S."/>
            <person name="Maiti R."/>
            <person name="Marziali A."/>
            <person name="Militscher J."/>
            <person name="Miranda M."/>
            <person name="Nguyen M."/>
            <person name="Nierman W.C."/>
            <person name="Osborne B.I."/>
            <person name="Pai G."/>
            <person name="Peterson J."/>
            <person name="Pham P.K."/>
            <person name="Rizzo M."/>
            <person name="Rooney T."/>
            <person name="Rowley D."/>
            <person name="Sakano H."/>
            <person name="Salzberg S.L."/>
            <person name="Schwartz J.R."/>
            <person name="Shinn P."/>
            <person name="Southwick A.M."/>
            <person name="Sun H."/>
            <person name="Tallon L.J."/>
            <person name="Tambunga G."/>
            <person name="Toriumi M.J."/>
            <person name="Town C.D."/>
            <person name="Utterback T."/>
            <person name="Van Aken S."/>
            <person name="Vaysberg M."/>
            <person name="Vysotskaia V.S."/>
            <person name="Walker M."/>
            <person name="Wu D."/>
            <person name="Yu G."/>
            <person name="Fraser C.M."/>
            <person name="Venter J.C."/>
            <person name="Davis R.W."/>
        </authorList>
    </citation>
    <scope>NUCLEOTIDE SEQUENCE [LARGE SCALE GENOMIC DNA]</scope>
    <source>
        <strain>cv. Columbia</strain>
    </source>
</reference>
<reference key="2">
    <citation type="journal article" date="2017" name="Plant J.">
        <title>Araport11: a complete reannotation of the Arabidopsis thaliana reference genome.</title>
        <authorList>
            <person name="Cheng C.Y."/>
            <person name="Krishnakumar V."/>
            <person name="Chan A.P."/>
            <person name="Thibaud-Nissen F."/>
            <person name="Schobel S."/>
            <person name="Town C.D."/>
        </authorList>
    </citation>
    <scope>GENOME REANNOTATION</scope>
    <source>
        <strain>cv. Columbia</strain>
    </source>
</reference>
<reference key="3">
    <citation type="journal article" date="2018" name="Plant Cell">
        <title>INCURVATA11 and CUPULIFORMIS2 are redundant genes that encode epigenetic machinery components in Arabidopsis.</title>
        <authorList>
            <person name="Mateo-Bonmati E."/>
            <person name="Esteve-Bruna D."/>
            <person name="Juan-Vicente L."/>
            <person name="Nadi R."/>
            <person name="Candela H."/>
            <person name="Lozano F.M."/>
            <person name="Ponce M.R."/>
            <person name="Perez-Perez J.M."/>
            <person name="Micol J.L."/>
        </authorList>
    </citation>
    <scope>FUNCTION</scope>
    <scope>SUBCELLULAR LOCATION</scope>
    <scope>TISSUE SPECIFICITY</scope>
    <scope>DISRUPTION PHENOTYPE</scope>
</reference>
<dbReference type="EC" id="1.14.11.-"/>
<dbReference type="EMBL" id="AF000657">
    <property type="protein sequence ID" value="AAB72163.1"/>
    <property type="status" value="ALT_SEQ"/>
    <property type="molecule type" value="Genomic_DNA"/>
</dbReference>
<dbReference type="EMBL" id="CP002684">
    <property type="protein sequence ID" value="AEE30314.1"/>
    <property type="molecule type" value="Genomic_DNA"/>
</dbReference>
<dbReference type="PIR" id="F86363">
    <property type="entry name" value="F86363"/>
</dbReference>
<dbReference type="RefSeq" id="NP_173708.3">
    <property type="nucleotide sequence ID" value="NM_102142.5"/>
</dbReference>
<dbReference type="SMR" id="Q3ED68"/>
<dbReference type="FunCoup" id="Q3ED68">
    <property type="interactions" value="1465"/>
</dbReference>
<dbReference type="IntAct" id="Q3ED68">
    <property type="interactions" value="1"/>
</dbReference>
<dbReference type="STRING" id="3702.Q3ED68"/>
<dbReference type="PaxDb" id="3702-AT1G22950.1"/>
<dbReference type="ProteomicsDB" id="242386"/>
<dbReference type="EnsemblPlants" id="AT1G22950.1">
    <property type="protein sequence ID" value="AT1G22950.1"/>
    <property type="gene ID" value="AT1G22950"/>
</dbReference>
<dbReference type="GeneID" id="838902"/>
<dbReference type="Gramene" id="AT1G22950.1">
    <property type="protein sequence ID" value="AT1G22950.1"/>
    <property type="gene ID" value="AT1G22950"/>
</dbReference>
<dbReference type="KEGG" id="ath:AT1G22950"/>
<dbReference type="Araport" id="AT1G22950"/>
<dbReference type="TAIR" id="AT1G22950">
    <property type="gene designation" value="ICU11"/>
</dbReference>
<dbReference type="eggNOG" id="KOG1971">
    <property type="taxonomic scope" value="Eukaryota"/>
</dbReference>
<dbReference type="HOGENOM" id="CLU_045835_0_0_1"/>
<dbReference type="InParanoid" id="Q3ED68"/>
<dbReference type="OMA" id="EVEHMER"/>
<dbReference type="PhylomeDB" id="Q3ED68"/>
<dbReference type="PRO" id="PR:Q3ED68"/>
<dbReference type="Proteomes" id="UP000006548">
    <property type="component" value="Chromosome 1"/>
</dbReference>
<dbReference type="ExpressionAtlas" id="Q3ED68">
    <property type="expression patterns" value="baseline and differential"/>
</dbReference>
<dbReference type="GO" id="GO:0005654">
    <property type="term" value="C:nucleoplasm"/>
    <property type="evidence" value="ECO:0007669"/>
    <property type="project" value="UniProtKB-SubCell"/>
</dbReference>
<dbReference type="GO" id="GO:0005634">
    <property type="term" value="C:nucleus"/>
    <property type="evidence" value="ECO:0000314"/>
    <property type="project" value="TAIR"/>
</dbReference>
<dbReference type="GO" id="GO:0051213">
    <property type="term" value="F:dioxygenase activity"/>
    <property type="evidence" value="ECO:0007669"/>
    <property type="project" value="UniProtKB-KW"/>
</dbReference>
<dbReference type="GO" id="GO:0005506">
    <property type="term" value="F:iron ion binding"/>
    <property type="evidence" value="ECO:0007669"/>
    <property type="project" value="InterPro"/>
</dbReference>
<dbReference type="GO" id="GO:0031418">
    <property type="term" value="F:L-ascorbic acid binding"/>
    <property type="evidence" value="ECO:0007669"/>
    <property type="project" value="UniProtKB-KW"/>
</dbReference>
<dbReference type="GO" id="GO:0016705">
    <property type="term" value="F:oxidoreductase activity, acting on paired donors, with incorporation or reduction of molecular oxygen"/>
    <property type="evidence" value="ECO:0007669"/>
    <property type="project" value="InterPro"/>
</dbReference>
<dbReference type="FunFam" id="2.60.120.620:FF:000067">
    <property type="entry name" value="Uncharacterized PKHD-type hydroxylase At1g22950"/>
    <property type="match status" value="1"/>
</dbReference>
<dbReference type="Gene3D" id="2.60.120.620">
    <property type="entry name" value="q2cbj1_9rhob like domain"/>
    <property type="match status" value="1"/>
</dbReference>
<dbReference type="InterPro" id="IPR005123">
    <property type="entry name" value="Oxoglu/Fe-dep_dioxygenase_dom"/>
</dbReference>
<dbReference type="InterPro" id="IPR006620">
    <property type="entry name" value="Pro_4_hyd_alph"/>
</dbReference>
<dbReference type="PANTHER" id="PTHR24014">
    <property type="entry name" value="2-OXOGLUTARATE AND IRON-DEPENDENT OXYGENASE DOMAIN-CONTAINING PROTEIN 2"/>
    <property type="match status" value="1"/>
</dbReference>
<dbReference type="PANTHER" id="PTHR24014:SF8">
    <property type="entry name" value="2-OXOGLUTARATE AND IRON-DEPENDENT OXYGENASE DOMAIN-CONTAINING PROTEIN ICU11"/>
    <property type="match status" value="1"/>
</dbReference>
<dbReference type="Pfam" id="PF25238">
    <property type="entry name" value="OGFOD2-like"/>
    <property type="match status" value="1"/>
</dbReference>
<dbReference type="SMART" id="SM00702">
    <property type="entry name" value="P4Hc"/>
    <property type="match status" value="1"/>
</dbReference>
<dbReference type="PROSITE" id="PS51471">
    <property type="entry name" value="FE2OG_OXY"/>
    <property type="match status" value="1"/>
</dbReference>
<accession>Q3ED68</accession>
<accession>O23127</accession>
<proteinExistence type="evidence at transcript level"/>
<protein>
    <recommendedName>
        <fullName evidence="6">2-oxoglutarate and iron-dependent oxygenase domain-containing protein ICU11</fullName>
        <ecNumber>1.14.11.-</ecNumber>
    </recommendedName>
    <alternativeName>
        <fullName evidence="5">Protein INCURVATA 11</fullName>
    </alternativeName>
</protein>
<name>ICU11_ARATH</name>
<organism>
    <name type="scientific">Arabidopsis thaliana</name>
    <name type="common">Mouse-ear cress</name>
    <dbReference type="NCBI Taxonomy" id="3702"/>
    <lineage>
        <taxon>Eukaryota</taxon>
        <taxon>Viridiplantae</taxon>
        <taxon>Streptophyta</taxon>
        <taxon>Embryophyta</taxon>
        <taxon>Tracheophyta</taxon>
        <taxon>Spermatophyta</taxon>
        <taxon>Magnoliopsida</taxon>
        <taxon>eudicotyledons</taxon>
        <taxon>Gunneridae</taxon>
        <taxon>Pentapetalae</taxon>
        <taxon>rosids</taxon>
        <taxon>malvids</taxon>
        <taxon>Brassicales</taxon>
        <taxon>Brassicaceae</taxon>
        <taxon>Camelineae</taxon>
        <taxon>Arabidopsis</taxon>
    </lineage>
</organism>
<keyword id="KW-0223">Dioxygenase</keyword>
<keyword id="KW-0408">Iron</keyword>
<keyword id="KW-0479">Metal-binding</keyword>
<keyword id="KW-0539">Nucleus</keyword>
<keyword id="KW-0560">Oxidoreductase</keyword>
<keyword id="KW-1185">Reference proteome</keyword>
<keyword id="KW-0847">Vitamin C</keyword>
<feature type="chain" id="PRO_0000342737" description="2-oxoglutarate and iron-dependent oxygenase domain-containing protein ICU11">
    <location>
        <begin position="1"/>
        <end position="397"/>
    </location>
</feature>
<feature type="domain" description="Fe2OG dioxygenase" evidence="2">
    <location>
        <begin position="238"/>
        <end position="339"/>
    </location>
</feature>
<feature type="region of interest" description="Disordered" evidence="3">
    <location>
        <begin position="1"/>
        <end position="56"/>
    </location>
</feature>
<feature type="compositionally biased region" description="Low complexity" evidence="3">
    <location>
        <begin position="18"/>
        <end position="27"/>
    </location>
</feature>
<feature type="binding site" evidence="2">
    <location>
        <position position="260"/>
    </location>
    <ligand>
        <name>Fe cation</name>
        <dbReference type="ChEBI" id="CHEBI:24875"/>
    </ligand>
</feature>
<feature type="binding site" evidence="2">
    <location>
        <position position="262"/>
    </location>
    <ligand>
        <name>Fe cation</name>
        <dbReference type="ChEBI" id="CHEBI:24875"/>
    </ligand>
</feature>
<feature type="binding site" evidence="2">
    <location>
        <position position="320"/>
    </location>
    <ligand>
        <name>Fe cation</name>
        <dbReference type="ChEBI" id="CHEBI:24875"/>
    </ligand>
</feature>
<feature type="binding site" evidence="2">
    <location>
        <position position="330"/>
    </location>
    <ligand>
        <name>2-oxoglutarate</name>
        <dbReference type="ChEBI" id="CHEBI:16810"/>
    </ligand>
</feature>
<sequence length="397" mass="45751">MCNQTPLRSMALDSSGKQPEQQQQQQPRASSGNGEARLKLRRTPNEEHEPENYEDLPLDYSPSLFTSLERYLPEQLLNSTRIDKASFMRDLLLRYSPDTERVRVLRHKEYRDKIMSSYQRLHGEIYTLDPSSFFAPSFLGAFSRKSEPNFRSSMVESYPGIFTFEMFKPQFCEMLLAEVEHMEKWVYDSRSTIMRPNTMNNFGVVLDDFGFDSMLQKLVDDFISPIAQVLFPEVCGTSLDSHHGYIVEYGKDRDVDLGFHVDDSEVSLNVCLGKQFSGGELYFRGVRCDKHVNSDSTEKEVYDYSHVPGHAILHRGRHRHGARATTSGHRANLILWCRSSTFREMKNYQRDFSGWCGGCKLDKQRRQRDSINATKEILARKAAEKTLVELASKSCAE</sequence>
<comment type="function">
    <text evidence="4">Participates in the epigenetic repression of flowering genes in association with CP2 (PubMed:29915151). Functions in the repression of several members of the MADS-box transcription factors family, including SEP3, during vegetative development via histone modification (PubMed:29915151).</text>
</comment>
<comment type="cofactor">
    <cofactor evidence="2">
        <name>Fe(2+)</name>
        <dbReference type="ChEBI" id="CHEBI:29033"/>
    </cofactor>
    <text evidence="2">Binds 1 Fe(2+) ion per subunit.</text>
</comment>
<comment type="cofactor">
    <cofactor evidence="1">
        <name>L-ascorbate</name>
        <dbReference type="ChEBI" id="CHEBI:38290"/>
    </cofactor>
</comment>
<comment type="subcellular location">
    <subcellularLocation>
        <location evidence="4">Nucleus</location>
        <location evidence="4">Nucleoplasm</location>
    </subcellularLocation>
</comment>
<comment type="tissue specificity">
    <text evidence="4">Expressed in roots, cotyledons, rosette leaves, cauline leaves and inflorescences.</text>
</comment>
<comment type="disruption phenotype">
    <text evidence="4">Altered plant morphology, including epinastic (curved downward) cotyledons, hyponastic (curved up) leaves, and reduced palisade mesophyll cell size (PubMed:29915151). Reduced number of leaves at bolting and early flowering (PubMed:29915151). The double mutant seedlings icu11 and cp2 skip the vegetative phase, flower immediately after germination and then die (PubMed:29915151).</text>
</comment>
<comment type="sequence caution" evidence="6">
    <conflict type="erroneous gene model prediction">
        <sequence resource="EMBL-CDS" id="AAB72163"/>
    </conflict>
    <text>The predicted gene has been split into 2 genes: At1g22950 and At1g22960.</text>
</comment>
<gene>
    <name evidence="5" type="primary">ICU11</name>
    <name evidence="7" type="ordered locus">At1g22950</name>
    <name evidence="8" type="ORF">F19G10.24</name>
</gene>